<feature type="chain" id="PRO_0000081239" description="Stage 0 sporulation protein A homolog">
    <location>
        <begin position="1" status="less than"/>
        <end position="161" status="greater than"/>
    </location>
</feature>
<feature type="domain" description="Response regulatory" evidence="3">
    <location>
        <begin position="1" status="less than"/>
        <end position="59"/>
    </location>
</feature>
<feature type="DNA-binding region" description="H-T-H motif" evidence="2">
    <location>
        <begin position="143"/>
        <end position="161" status="greater than"/>
    </location>
</feature>
<feature type="non-terminal residue">
    <location>
        <position position="1"/>
    </location>
</feature>
<feature type="non-terminal residue">
    <location>
        <position position="161"/>
    </location>
</feature>
<name>SP0A_CLOBU</name>
<organism>
    <name type="scientific">Clostridium butyricum</name>
    <dbReference type="NCBI Taxonomy" id="1492"/>
    <lineage>
        <taxon>Bacteria</taxon>
        <taxon>Bacillati</taxon>
        <taxon>Bacillota</taxon>
        <taxon>Clostridia</taxon>
        <taxon>Eubacteriales</taxon>
        <taxon>Clostridiaceae</taxon>
        <taxon>Clostridium</taxon>
    </lineage>
</organism>
<gene>
    <name type="primary">spo0A</name>
</gene>
<accession>P52937</accession>
<keyword id="KW-0010">Activator</keyword>
<keyword id="KW-0106">Calcium</keyword>
<keyword id="KW-0963">Cytoplasm</keyword>
<keyword id="KW-0238">DNA-binding</keyword>
<keyword id="KW-0597">Phosphoprotein</keyword>
<keyword id="KW-0678">Repressor</keyword>
<keyword id="KW-0749">Sporulation</keyword>
<keyword id="KW-0804">Transcription</keyword>
<keyword id="KW-0805">Transcription regulation</keyword>
<keyword id="KW-0902">Two-component regulatory system</keyword>
<sequence>LGVLEKLNTMDLEKTPRIIILSAVGQDKITQQAITLGADYYTVKPFDMEVFTKRIREMFNSAPTIQESSAQSNRVSYPTTSSYILTSEPKSKTPVDLETEITNIIHEIGVPAHIKGYMYLREAITMVVNDMELLSAVTKELYPSIAKKYNTTASRVERAIR</sequence>
<reference key="1">
    <citation type="journal article" date="1994" name="Mol. Microbiol.">
        <title>Characterization of spo0A homologues in diverse Bacillus and Clostridium species identifies a probable DNA-binding domain.</title>
        <authorList>
            <person name="Brown D.P."/>
            <person name="Ganova-Raeva L."/>
            <person name="Green B.D."/>
            <person name="Wilkinson S.R."/>
            <person name="Young M."/>
            <person name="Youngman P."/>
        </authorList>
    </citation>
    <scope>NUCLEOTIDE SEQUENCE [GENOMIC DNA]</scope>
    <source>
        <strain>ATCC 19398 / DSM 10702 / JCM 1391 / NCIMB 7423</strain>
    </source>
</reference>
<dbReference type="EMBL" id="U09980">
    <property type="protein sequence ID" value="AAA18881.1"/>
    <property type="molecule type" value="Unassigned_DNA"/>
</dbReference>
<dbReference type="PIR" id="S60878">
    <property type="entry name" value="S60878"/>
</dbReference>
<dbReference type="SMR" id="P52937"/>
<dbReference type="GO" id="GO:0005737">
    <property type="term" value="C:cytoplasm"/>
    <property type="evidence" value="ECO:0007669"/>
    <property type="project" value="UniProtKB-SubCell"/>
</dbReference>
<dbReference type="GO" id="GO:0005509">
    <property type="term" value="F:calcium ion binding"/>
    <property type="evidence" value="ECO:0007669"/>
    <property type="project" value="InterPro"/>
</dbReference>
<dbReference type="GO" id="GO:0003677">
    <property type="term" value="F:DNA binding"/>
    <property type="evidence" value="ECO:0007669"/>
    <property type="project" value="UniProtKB-KW"/>
</dbReference>
<dbReference type="GO" id="GO:0003700">
    <property type="term" value="F:DNA-binding transcription factor activity"/>
    <property type="evidence" value="ECO:0007669"/>
    <property type="project" value="InterPro"/>
</dbReference>
<dbReference type="GO" id="GO:0051606">
    <property type="term" value="P:detection of stimulus"/>
    <property type="evidence" value="ECO:0007669"/>
    <property type="project" value="InterPro"/>
</dbReference>
<dbReference type="GO" id="GO:0000160">
    <property type="term" value="P:phosphorelay signal transduction system"/>
    <property type="evidence" value="ECO:0007669"/>
    <property type="project" value="UniProtKB-KW"/>
</dbReference>
<dbReference type="GO" id="GO:0042173">
    <property type="term" value="P:regulation of sporulation resulting in formation of a cellular spore"/>
    <property type="evidence" value="ECO:0007669"/>
    <property type="project" value="InterPro"/>
</dbReference>
<dbReference type="GO" id="GO:0030435">
    <property type="term" value="P:sporulation resulting in formation of a cellular spore"/>
    <property type="evidence" value="ECO:0007669"/>
    <property type="project" value="UniProtKB-KW"/>
</dbReference>
<dbReference type="Gene3D" id="3.40.50.2300">
    <property type="match status" value="1"/>
</dbReference>
<dbReference type="Gene3D" id="1.10.10.10">
    <property type="entry name" value="Winged helix-like DNA-binding domain superfamily/Winged helix DNA-binding domain"/>
    <property type="match status" value="1"/>
</dbReference>
<dbReference type="InterPro" id="IPR011006">
    <property type="entry name" value="CheY-like_superfamily"/>
</dbReference>
<dbReference type="InterPro" id="IPR016032">
    <property type="entry name" value="Sig_transdc_resp-reg_C-effctor"/>
</dbReference>
<dbReference type="InterPro" id="IPR001789">
    <property type="entry name" value="Sig_transdc_resp-reg_receiver"/>
</dbReference>
<dbReference type="InterPro" id="IPR014879">
    <property type="entry name" value="Spo0A_C"/>
</dbReference>
<dbReference type="InterPro" id="IPR012052">
    <property type="entry name" value="Spore_0_A"/>
</dbReference>
<dbReference type="InterPro" id="IPR036388">
    <property type="entry name" value="WH-like_DNA-bd_sf"/>
</dbReference>
<dbReference type="NCBIfam" id="TIGR02875">
    <property type="entry name" value="spore_0_A"/>
    <property type="match status" value="1"/>
</dbReference>
<dbReference type="Pfam" id="PF08769">
    <property type="entry name" value="Spo0A_C"/>
    <property type="match status" value="1"/>
</dbReference>
<dbReference type="SUPFAM" id="SSF46894">
    <property type="entry name" value="C-terminal effector domain of the bipartite response regulators"/>
    <property type="match status" value="1"/>
</dbReference>
<dbReference type="SUPFAM" id="SSF52172">
    <property type="entry name" value="CheY-like"/>
    <property type="match status" value="1"/>
</dbReference>
<dbReference type="PROSITE" id="PS50110">
    <property type="entry name" value="RESPONSE_REGULATORY"/>
    <property type="match status" value="1"/>
</dbReference>
<comment type="function">
    <text evidence="1">May play the central regulatory role in sporulation. It may be an element of the effector pathway responsible for the activation of sporulation genes in response to nutritional stress. Spo0A may act in concert with spo0H (a sigma factor) to control the expression of some genes that are critical to the sporulation process (By similarity).</text>
</comment>
<comment type="cofactor">
    <cofactor evidence="1">
        <name>Ca(2+)</name>
        <dbReference type="ChEBI" id="CHEBI:29108"/>
    </cofactor>
    <text evidence="1">Binds 1 Ca(2+) ion per subunit.</text>
</comment>
<comment type="subcellular location">
    <subcellularLocation>
        <location evidence="4">Cytoplasm</location>
    </subcellularLocation>
</comment>
<protein>
    <recommendedName>
        <fullName>Stage 0 sporulation protein A homolog</fullName>
    </recommendedName>
</protein>
<evidence type="ECO:0000250" key="1"/>
<evidence type="ECO:0000255" key="2"/>
<evidence type="ECO:0000255" key="3">
    <source>
        <dbReference type="PROSITE-ProRule" id="PRU00169"/>
    </source>
</evidence>
<evidence type="ECO:0000305" key="4"/>
<proteinExistence type="inferred from homology"/>